<sequence length="62" mass="6945">MVDYTQRPKSRFLRVKCNDCENEQIIFGSASRKITCVVCGRTLAEPTGGKSTITTHILEVLE</sequence>
<gene>
    <name evidence="1" type="primary">rps27e</name>
    <name type="ordered locus">MM_1808</name>
</gene>
<proteinExistence type="inferred from homology"/>
<comment type="cofactor">
    <cofactor evidence="1">
        <name>Zn(2+)</name>
        <dbReference type="ChEBI" id="CHEBI:29105"/>
    </cofactor>
    <text evidence="1">Binds 1 zinc ion per subunit.</text>
</comment>
<comment type="subunit">
    <text evidence="1">Part of the 30S ribosomal subunit.</text>
</comment>
<comment type="similarity">
    <text evidence="1">Belongs to the eukaryotic ribosomal protein eS27 family.</text>
</comment>
<keyword id="KW-0479">Metal-binding</keyword>
<keyword id="KW-0687">Ribonucleoprotein</keyword>
<keyword id="KW-0689">Ribosomal protein</keyword>
<keyword id="KW-0862">Zinc</keyword>
<keyword id="KW-0863">Zinc-finger</keyword>
<feature type="chain" id="PRO_0000149074" description="Small ribosomal subunit protein eS27">
    <location>
        <begin position="1"/>
        <end position="62"/>
    </location>
</feature>
<feature type="zinc finger region" description="C4-type" evidence="1">
    <location>
        <begin position="17"/>
        <end position="39"/>
    </location>
</feature>
<feature type="binding site" evidence="1">
    <location>
        <position position="17"/>
    </location>
    <ligand>
        <name>Zn(2+)</name>
        <dbReference type="ChEBI" id="CHEBI:29105"/>
    </ligand>
</feature>
<feature type="binding site" evidence="1">
    <location>
        <position position="20"/>
    </location>
    <ligand>
        <name>Zn(2+)</name>
        <dbReference type="ChEBI" id="CHEBI:29105"/>
    </ligand>
</feature>
<feature type="binding site" evidence="1">
    <location>
        <position position="36"/>
    </location>
    <ligand>
        <name>Zn(2+)</name>
        <dbReference type="ChEBI" id="CHEBI:29105"/>
    </ligand>
</feature>
<feature type="binding site" evidence="1">
    <location>
        <position position="39"/>
    </location>
    <ligand>
        <name>Zn(2+)</name>
        <dbReference type="ChEBI" id="CHEBI:29105"/>
    </ligand>
</feature>
<name>RS27_METMA</name>
<accession>P61932</accession>
<accession>Q8TSZ8</accession>
<protein>
    <recommendedName>
        <fullName evidence="1">Small ribosomal subunit protein eS27</fullName>
    </recommendedName>
    <alternativeName>
        <fullName evidence="2">30S ribosomal protein S27e</fullName>
    </alternativeName>
</protein>
<dbReference type="EMBL" id="AE008384">
    <property type="protein sequence ID" value="AAM31504.1"/>
    <property type="molecule type" value="Genomic_DNA"/>
</dbReference>
<dbReference type="RefSeq" id="WP_011020692.1">
    <property type="nucleotide sequence ID" value="NC_003901.1"/>
</dbReference>
<dbReference type="SMR" id="P61932"/>
<dbReference type="KEGG" id="mma:MM_1808"/>
<dbReference type="PATRIC" id="fig|192952.21.peg.2091"/>
<dbReference type="eggNOG" id="arCOG04108">
    <property type="taxonomic scope" value="Archaea"/>
</dbReference>
<dbReference type="HOGENOM" id="CLU_199465_0_0_2"/>
<dbReference type="Proteomes" id="UP000000595">
    <property type="component" value="Chromosome"/>
</dbReference>
<dbReference type="GO" id="GO:1990904">
    <property type="term" value="C:ribonucleoprotein complex"/>
    <property type="evidence" value="ECO:0007669"/>
    <property type="project" value="UniProtKB-KW"/>
</dbReference>
<dbReference type="GO" id="GO:0005840">
    <property type="term" value="C:ribosome"/>
    <property type="evidence" value="ECO:0007669"/>
    <property type="project" value="UniProtKB-KW"/>
</dbReference>
<dbReference type="GO" id="GO:0003735">
    <property type="term" value="F:structural constituent of ribosome"/>
    <property type="evidence" value="ECO:0007669"/>
    <property type="project" value="InterPro"/>
</dbReference>
<dbReference type="GO" id="GO:0008270">
    <property type="term" value="F:zinc ion binding"/>
    <property type="evidence" value="ECO:0007669"/>
    <property type="project" value="UniProtKB-UniRule"/>
</dbReference>
<dbReference type="GO" id="GO:0006412">
    <property type="term" value="P:translation"/>
    <property type="evidence" value="ECO:0007669"/>
    <property type="project" value="UniProtKB-UniRule"/>
</dbReference>
<dbReference type="FunFam" id="2.20.25.100:FF:000002">
    <property type="entry name" value="30S ribosomal protein S27e"/>
    <property type="match status" value="1"/>
</dbReference>
<dbReference type="Gene3D" id="2.20.25.100">
    <property type="entry name" value="Zn-binding ribosomal proteins"/>
    <property type="match status" value="1"/>
</dbReference>
<dbReference type="HAMAP" id="MF_00371">
    <property type="entry name" value="Ribosomal_eS27"/>
    <property type="match status" value="1"/>
</dbReference>
<dbReference type="InterPro" id="IPR000592">
    <property type="entry name" value="Ribosomal_eS27"/>
</dbReference>
<dbReference type="InterPro" id="IPR023407">
    <property type="entry name" value="Ribosomal_eS27_Zn-bd_dom_sf"/>
</dbReference>
<dbReference type="InterPro" id="IPR011332">
    <property type="entry name" value="Ribosomal_zn-bd"/>
</dbReference>
<dbReference type="NCBIfam" id="NF001629">
    <property type="entry name" value="PRK00415.1"/>
    <property type="match status" value="1"/>
</dbReference>
<dbReference type="Pfam" id="PF01667">
    <property type="entry name" value="Ribosomal_S27e"/>
    <property type="match status" value="1"/>
</dbReference>
<dbReference type="SUPFAM" id="SSF57829">
    <property type="entry name" value="Zn-binding ribosomal proteins"/>
    <property type="match status" value="1"/>
</dbReference>
<dbReference type="PROSITE" id="PS01168">
    <property type="entry name" value="RIBOSOMAL_S27E"/>
    <property type="match status" value="1"/>
</dbReference>
<organism>
    <name type="scientific">Methanosarcina mazei (strain ATCC BAA-159 / DSM 3647 / Goe1 / Go1 / JCM 11833 / OCM 88)</name>
    <name type="common">Methanosarcina frisia</name>
    <dbReference type="NCBI Taxonomy" id="192952"/>
    <lineage>
        <taxon>Archaea</taxon>
        <taxon>Methanobacteriati</taxon>
        <taxon>Methanobacteriota</taxon>
        <taxon>Stenosarchaea group</taxon>
        <taxon>Methanomicrobia</taxon>
        <taxon>Methanosarcinales</taxon>
        <taxon>Methanosarcinaceae</taxon>
        <taxon>Methanosarcina</taxon>
    </lineage>
</organism>
<evidence type="ECO:0000255" key="1">
    <source>
        <dbReference type="HAMAP-Rule" id="MF_00371"/>
    </source>
</evidence>
<evidence type="ECO:0000305" key="2"/>
<reference key="1">
    <citation type="journal article" date="2002" name="J. Mol. Microbiol. Biotechnol.">
        <title>The genome of Methanosarcina mazei: evidence for lateral gene transfer between Bacteria and Archaea.</title>
        <authorList>
            <person name="Deppenmeier U."/>
            <person name="Johann A."/>
            <person name="Hartsch T."/>
            <person name="Merkl R."/>
            <person name="Schmitz R.A."/>
            <person name="Martinez-Arias R."/>
            <person name="Henne A."/>
            <person name="Wiezer A."/>
            <person name="Baeumer S."/>
            <person name="Jacobi C."/>
            <person name="Brueggemann H."/>
            <person name="Lienard T."/>
            <person name="Christmann A."/>
            <person name="Boemecke M."/>
            <person name="Steckel S."/>
            <person name="Bhattacharyya A."/>
            <person name="Lykidis A."/>
            <person name="Overbeek R."/>
            <person name="Klenk H.-P."/>
            <person name="Gunsalus R.P."/>
            <person name="Fritz H.-J."/>
            <person name="Gottschalk G."/>
        </authorList>
    </citation>
    <scope>NUCLEOTIDE SEQUENCE [LARGE SCALE GENOMIC DNA]</scope>
    <source>
        <strain>ATCC BAA-159 / DSM 3647 / Goe1 / Go1 / JCM 11833 / OCM 88</strain>
    </source>
</reference>